<comment type="function">
    <text evidence="1">Required for rescue of stalled ribosomes mediated by trans-translation. Binds to transfer-messenger RNA (tmRNA), required for stable association of tmRNA with ribosomes. tmRNA and SmpB together mimic tRNA shape, replacing the anticodon stem-loop with SmpB. tmRNA is encoded by the ssrA gene; the 2 termini fold to resemble tRNA(Ala) and it encodes a 'tag peptide', a short internal open reading frame. During trans-translation Ala-aminoacylated tmRNA acts like a tRNA, entering the A-site of stalled ribosomes, displacing the stalled mRNA. The ribosome then switches to translate the ORF on the tmRNA; the nascent peptide is terminated with the 'tag peptide' encoded by the tmRNA and targeted for degradation. The ribosome is freed to recommence translation, which seems to be the essential function of trans-translation.</text>
</comment>
<comment type="subcellular location">
    <subcellularLocation>
        <location evidence="1">Cytoplasm</location>
    </subcellularLocation>
    <text evidence="1">The tmRNA-SmpB complex associates with stalled 70S ribosomes.</text>
</comment>
<comment type="similarity">
    <text evidence="1">Belongs to the SmpB family.</text>
</comment>
<keyword id="KW-0963">Cytoplasm</keyword>
<keyword id="KW-0694">RNA-binding</keyword>
<evidence type="ECO:0000255" key="1">
    <source>
        <dbReference type="HAMAP-Rule" id="MF_00023"/>
    </source>
</evidence>
<proteinExistence type="inferred from homology"/>
<protein>
    <recommendedName>
        <fullName evidence="1">SsrA-binding protein</fullName>
    </recommendedName>
    <alternativeName>
        <fullName evidence="1">Small protein B</fullName>
    </alternativeName>
</protein>
<organism>
    <name type="scientific">Acinetobacter baumannii (strain ACICU)</name>
    <dbReference type="NCBI Taxonomy" id="405416"/>
    <lineage>
        <taxon>Bacteria</taxon>
        <taxon>Pseudomonadati</taxon>
        <taxon>Pseudomonadota</taxon>
        <taxon>Gammaproteobacteria</taxon>
        <taxon>Moraxellales</taxon>
        <taxon>Moraxellaceae</taxon>
        <taxon>Acinetobacter</taxon>
        <taxon>Acinetobacter calcoaceticus/baumannii complex</taxon>
    </lineage>
</organism>
<sequence length="158" mass="18080">MAKATVVKKHNGGTIAQNKRARHDYFIEEKFEAGMSLLGWEVKSLRAGRMSLTESYVIFKNGEAFLFGAQIQPLLSASTHIVPEATRTRKLLLSRRELEKLMGAVNQKGYSCVPLACYWKGHLVKLEIALVKGKQLHDKRATEKERDWQRDKARIFHK</sequence>
<dbReference type="EMBL" id="CP000863">
    <property type="protein sequence ID" value="ACC56109.1"/>
    <property type="molecule type" value="Genomic_DNA"/>
</dbReference>
<dbReference type="RefSeq" id="WP_001029798.1">
    <property type="nucleotide sequence ID" value="NZ_CP031380.1"/>
</dbReference>
<dbReference type="SMR" id="B2HUN4"/>
<dbReference type="GeneID" id="92892774"/>
<dbReference type="KEGG" id="abc:ACICU_00797"/>
<dbReference type="HOGENOM" id="CLU_108953_3_0_6"/>
<dbReference type="Proteomes" id="UP000008839">
    <property type="component" value="Chromosome"/>
</dbReference>
<dbReference type="GO" id="GO:0005829">
    <property type="term" value="C:cytosol"/>
    <property type="evidence" value="ECO:0007669"/>
    <property type="project" value="TreeGrafter"/>
</dbReference>
<dbReference type="GO" id="GO:0003723">
    <property type="term" value="F:RNA binding"/>
    <property type="evidence" value="ECO:0007669"/>
    <property type="project" value="UniProtKB-UniRule"/>
</dbReference>
<dbReference type="GO" id="GO:0070929">
    <property type="term" value="P:trans-translation"/>
    <property type="evidence" value="ECO:0007669"/>
    <property type="project" value="UniProtKB-UniRule"/>
</dbReference>
<dbReference type="CDD" id="cd09294">
    <property type="entry name" value="SmpB"/>
    <property type="match status" value="1"/>
</dbReference>
<dbReference type="Gene3D" id="2.40.280.10">
    <property type="match status" value="1"/>
</dbReference>
<dbReference type="HAMAP" id="MF_00023">
    <property type="entry name" value="SmpB"/>
    <property type="match status" value="1"/>
</dbReference>
<dbReference type="InterPro" id="IPR023620">
    <property type="entry name" value="SmpB"/>
</dbReference>
<dbReference type="InterPro" id="IPR000037">
    <property type="entry name" value="SsrA-bd_prot"/>
</dbReference>
<dbReference type="InterPro" id="IPR020081">
    <property type="entry name" value="SsrA-bd_prot_CS"/>
</dbReference>
<dbReference type="NCBIfam" id="NF003843">
    <property type="entry name" value="PRK05422.1"/>
    <property type="match status" value="1"/>
</dbReference>
<dbReference type="NCBIfam" id="TIGR00086">
    <property type="entry name" value="smpB"/>
    <property type="match status" value="1"/>
</dbReference>
<dbReference type="PANTHER" id="PTHR30308:SF2">
    <property type="entry name" value="SSRA-BINDING PROTEIN"/>
    <property type="match status" value="1"/>
</dbReference>
<dbReference type="PANTHER" id="PTHR30308">
    <property type="entry name" value="TMRNA-BINDING COMPONENT OF TRANS-TRANSLATION TAGGING COMPLEX"/>
    <property type="match status" value="1"/>
</dbReference>
<dbReference type="Pfam" id="PF01668">
    <property type="entry name" value="SmpB"/>
    <property type="match status" value="1"/>
</dbReference>
<dbReference type="SUPFAM" id="SSF74982">
    <property type="entry name" value="Small protein B (SmpB)"/>
    <property type="match status" value="1"/>
</dbReference>
<dbReference type="PROSITE" id="PS01317">
    <property type="entry name" value="SSRP"/>
    <property type="match status" value="1"/>
</dbReference>
<reference key="1">
    <citation type="journal article" date="2008" name="Antimicrob. Agents Chemother.">
        <title>Whole-genome pyrosequencing of an epidemic multidrug-resistant Acinetobacter baumannii strain belonging to the European clone II group.</title>
        <authorList>
            <person name="Iacono M."/>
            <person name="Villa L."/>
            <person name="Fortini D."/>
            <person name="Bordoni R."/>
            <person name="Imperi F."/>
            <person name="Bonnal R.J."/>
            <person name="Sicheritz-Ponten T."/>
            <person name="De Bellis G."/>
            <person name="Visca P."/>
            <person name="Cassone A."/>
            <person name="Carattoli A."/>
        </authorList>
    </citation>
    <scope>NUCLEOTIDE SEQUENCE [LARGE SCALE GENOMIC DNA]</scope>
    <source>
        <strain>ACICU</strain>
    </source>
</reference>
<name>SSRP_ACIBC</name>
<feature type="chain" id="PRO_1000090129" description="SsrA-binding protein">
    <location>
        <begin position="1"/>
        <end position="158"/>
    </location>
</feature>
<gene>
    <name evidence="1" type="primary">smpB</name>
    <name type="ordered locus">ACICU_00797</name>
</gene>
<accession>B2HUN4</accession>